<sequence length="189" mass="20554">MPRPENPIQLAVIGAAHGTRGEVRVKTFTGDPLAIADYGLLYDEQGKAYEILEARVAKTVVIVRFKGVNDRNAAEALNGTELFIDRSQLPDEELDEDEFFQTDLIGLEAVDGDGKSYGVVSAIFDFGGGDLIELSEKGKRPMLIPFTEAAVPEIDFDKGIIKVEPHAAGLIADEHDNPPHESGKKPKKP</sequence>
<comment type="function">
    <text evidence="1">An accessory protein needed during the final step in the assembly of 30S ribosomal subunit, possibly for assembly of the head region. Essential for efficient processing of 16S rRNA. May be needed both before and after RbfA during the maturation of 16S rRNA. It has affinity for free ribosomal 30S subunits but not for 70S ribosomes.</text>
</comment>
<comment type="subunit">
    <text evidence="1">Binds ribosomal protein uS19.</text>
</comment>
<comment type="subcellular location">
    <subcellularLocation>
        <location evidence="1">Cytoplasm</location>
    </subcellularLocation>
</comment>
<comment type="domain">
    <text evidence="1">The PRC barrel domain binds ribosomal protein uS19.</text>
</comment>
<comment type="similarity">
    <text evidence="1">Belongs to the RimM family.</text>
</comment>
<keyword id="KW-0143">Chaperone</keyword>
<keyword id="KW-0963">Cytoplasm</keyword>
<keyword id="KW-1185">Reference proteome</keyword>
<keyword id="KW-0690">Ribosome biogenesis</keyword>
<keyword id="KW-0698">rRNA processing</keyword>
<dbReference type="EMBL" id="AM040264">
    <property type="protein sequence ID" value="CAJ11871.1"/>
    <property type="molecule type" value="Genomic_DNA"/>
</dbReference>
<dbReference type="RefSeq" id="WP_002964983.1">
    <property type="nucleotide sequence ID" value="NZ_KN046823.1"/>
</dbReference>
<dbReference type="SMR" id="Q2YLT0"/>
<dbReference type="STRING" id="359391.BAB1_1915"/>
<dbReference type="GeneID" id="93017753"/>
<dbReference type="KEGG" id="bmf:BAB1_1915"/>
<dbReference type="PATRIC" id="fig|359391.11.peg.1156"/>
<dbReference type="HOGENOM" id="CLU_077636_0_1_5"/>
<dbReference type="PhylomeDB" id="Q2YLT0"/>
<dbReference type="Proteomes" id="UP000002719">
    <property type="component" value="Chromosome I"/>
</dbReference>
<dbReference type="GO" id="GO:0005737">
    <property type="term" value="C:cytoplasm"/>
    <property type="evidence" value="ECO:0007669"/>
    <property type="project" value="UniProtKB-SubCell"/>
</dbReference>
<dbReference type="GO" id="GO:0005840">
    <property type="term" value="C:ribosome"/>
    <property type="evidence" value="ECO:0007669"/>
    <property type="project" value="InterPro"/>
</dbReference>
<dbReference type="GO" id="GO:0043022">
    <property type="term" value="F:ribosome binding"/>
    <property type="evidence" value="ECO:0007669"/>
    <property type="project" value="InterPro"/>
</dbReference>
<dbReference type="GO" id="GO:0042274">
    <property type="term" value="P:ribosomal small subunit biogenesis"/>
    <property type="evidence" value="ECO:0007669"/>
    <property type="project" value="UniProtKB-UniRule"/>
</dbReference>
<dbReference type="GO" id="GO:0006364">
    <property type="term" value="P:rRNA processing"/>
    <property type="evidence" value="ECO:0007669"/>
    <property type="project" value="UniProtKB-UniRule"/>
</dbReference>
<dbReference type="Gene3D" id="2.30.30.240">
    <property type="entry name" value="PRC-barrel domain"/>
    <property type="match status" value="1"/>
</dbReference>
<dbReference type="Gene3D" id="2.40.30.60">
    <property type="entry name" value="RimM"/>
    <property type="match status" value="1"/>
</dbReference>
<dbReference type="HAMAP" id="MF_00014">
    <property type="entry name" value="Ribosome_mat_RimM"/>
    <property type="match status" value="1"/>
</dbReference>
<dbReference type="InterPro" id="IPR011033">
    <property type="entry name" value="PRC_barrel-like_sf"/>
</dbReference>
<dbReference type="InterPro" id="IPR056792">
    <property type="entry name" value="PRC_RimM"/>
</dbReference>
<dbReference type="InterPro" id="IPR011961">
    <property type="entry name" value="RimM"/>
</dbReference>
<dbReference type="InterPro" id="IPR002676">
    <property type="entry name" value="RimM_N"/>
</dbReference>
<dbReference type="InterPro" id="IPR036976">
    <property type="entry name" value="RimM_N_sf"/>
</dbReference>
<dbReference type="InterPro" id="IPR009000">
    <property type="entry name" value="Transl_B-barrel_sf"/>
</dbReference>
<dbReference type="NCBIfam" id="TIGR02273">
    <property type="entry name" value="16S_RimM"/>
    <property type="match status" value="1"/>
</dbReference>
<dbReference type="PANTHER" id="PTHR33692">
    <property type="entry name" value="RIBOSOME MATURATION FACTOR RIMM"/>
    <property type="match status" value="1"/>
</dbReference>
<dbReference type="PANTHER" id="PTHR33692:SF1">
    <property type="entry name" value="RIBOSOME MATURATION FACTOR RIMM"/>
    <property type="match status" value="1"/>
</dbReference>
<dbReference type="Pfam" id="PF24986">
    <property type="entry name" value="PRC_RimM"/>
    <property type="match status" value="1"/>
</dbReference>
<dbReference type="Pfam" id="PF01782">
    <property type="entry name" value="RimM"/>
    <property type="match status" value="1"/>
</dbReference>
<dbReference type="SUPFAM" id="SSF50346">
    <property type="entry name" value="PRC-barrel domain"/>
    <property type="match status" value="1"/>
</dbReference>
<dbReference type="SUPFAM" id="SSF50447">
    <property type="entry name" value="Translation proteins"/>
    <property type="match status" value="1"/>
</dbReference>
<evidence type="ECO:0000255" key="1">
    <source>
        <dbReference type="HAMAP-Rule" id="MF_00014"/>
    </source>
</evidence>
<evidence type="ECO:0000256" key="2">
    <source>
        <dbReference type="SAM" id="MobiDB-lite"/>
    </source>
</evidence>
<organism>
    <name type="scientific">Brucella abortus (strain 2308)</name>
    <dbReference type="NCBI Taxonomy" id="359391"/>
    <lineage>
        <taxon>Bacteria</taxon>
        <taxon>Pseudomonadati</taxon>
        <taxon>Pseudomonadota</taxon>
        <taxon>Alphaproteobacteria</taxon>
        <taxon>Hyphomicrobiales</taxon>
        <taxon>Brucellaceae</taxon>
        <taxon>Brucella/Ochrobactrum group</taxon>
        <taxon>Brucella</taxon>
    </lineage>
</organism>
<proteinExistence type="inferred from homology"/>
<gene>
    <name evidence="1" type="primary">rimM</name>
    <name type="ordered locus">BAB1_1915</name>
</gene>
<feature type="chain" id="PRO_0000244115" description="Ribosome maturation factor RimM">
    <location>
        <begin position="1"/>
        <end position="189"/>
    </location>
</feature>
<feature type="domain" description="PRC barrel" evidence="1">
    <location>
        <begin position="96"/>
        <end position="169"/>
    </location>
</feature>
<feature type="region of interest" description="Disordered" evidence="2">
    <location>
        <begin position="168"/>
        <end position="189"/>
    </location>
</feature>
<feature type="compositionally biased region" description="Basic and acidic residues" evidence="2">
    <location>
        <begin position="172"/>
        <end position="189"/>
    </location>
</feature>
<protein>
    <recommendedName>
        <fullName evidence="1">Ribosome maturation factor RimM</fullName>
    </recommendedName>
</protein>
<name>RIMM_BRUA2</name>
<reference key="1">
    <citation type="journal article" date="2005" name="Infect. Immun.">
        <title>Whole-genome analyses of speciation events in pathogenic Brucellae.</title>
        <authorList>
            <person name="Chain P.S."/>
            <person name="Comerci D.J."/>
            <person name="Tolmasky M.E."/>
            <person name="Larimer F.W."/>
            <person name="Malfatti S.A."/>
            <person name="Vergez L.M."/>
            <person name="Aguero F."/>
            <person name="Land M.L."/>
            <person name="Ugalde R.A."/>
            <person name="Garcia E."/>
        </authorList>
    </citation>
    <scope>NUCLEOTIDE SEQUENCE [LARGE SCALE GENOMIC DNA]</scope>
    <source>
        <strain>2308</strain>
    </source>
</reference>
<accession>Q2YLT0</accession>